<dbReference type="EMBL" id="CP000260">
    <property type="protein sequence ID" value="ABF33600.1"/>
    <property type="molecule type" value="Genomic_DNA"/>
</dbReference>
<dbReference type="SMR" id="Q1JHS3"/>
<dbReference type="KEGG" id="sph:MGAS10270_Spy0535"/>
<dbReference type="HOGENOM" id="CLU_053282_0_0_9"/>
<dbReference type="Proteomes" id="UP000002436">
    <property type="component" value="Chromosome"/>
</dbReference>
<dbReference type="GO" id="GO:0003677">
    <property type="term" value="F:DNA binding"/>
    <property type="evidence" value="ECO:0007669"/>
    <property type="project" value="UniProtKB-UniRule"/>
</dbReference>
<dbReference type="GO" id="GO:0051301">
    <property type="term" value="P:cell division"/>
    <property type="evidence" value="ECO:0007669"/>
    <property type="project" value="UniProtKB-UniRule"/>
</dbReference>
<dbReference type="GO" id="GO:0043937">
    <property type="term" value="P:regulation of sporulation"/>
    <property type="evidence" value="ECO:0007669"/>
    <property type="project" value="InterPro"/>
</dbReference>
<dbReference type="Gene3D" id="3.10.28.10">
    <property type="entry name" value="Homing endonucleases"/>
    <property type="match status" value="1"/>
</dbReference>
<dbReference type="HAMAP" id="MF_01420">
    <property type="entry name" value="HTH_type_WhiA"/>
    <property type="match status" value="1"/>
</dbReference>
<dbReference type="InterPro" id="IPR027434">
    <property type="entry name" value="Homing_endonucl"/>
</dbReference>
<dbReference type="InterPro" id="IPR018478">
    <property type="entry name" value="Sporu_reg_WhiA_N_dom"/>
</dbReference>
<dbReference type="InterPro" id="IPR003802">
    <property type="entry name" value="Sporulation_regulator_WhiA"/>
</dbReference>
<dbReference type="InterPro" id="IPR023054">
    <property type="entry name" value="Sporulation_regulator_WhiA_C"/>
</dbReference>
<dbReference type="InterPro" id="IPR039518">
    <property type="entry name" value="WhiA_LAGLIDADG_dom"/>
</dbReference>
<dbReference type="NCBIfam" id="TIGR00647">
    <property type="entry name" value="DNA_bind_WhiA"/>
    <property type="match status" value="1"/>
</dbReference>
<dbReference type="PANTHER" id="PTHR37307">
    <property type="entry name" value="CELL DIVISION PROTEIN WHIA-RELATED"/>
    <property type="match status" value="1"/>
</dbReference>
<dbReference type="PANTHER" id="PTHR37307:SF1">
    <property type="entry name" value="CELL DIVISION PROTEIN WHIA-RELATED"/>
    <property type="match status" value="1"/>
</dbReference>
<dbReference type="Pfam" id="PF02650">
    <property type="entry name" value="HTH_WhiA"/>
    <property type="match status" value="1"/>
</dbReference>
<dbReference type="Pfam" id="PF14527">
    <property type="entry name" value="LAGLIDADG_WhiA"/>
    <property type="match status" value="1"/>
</dbReference>
<dbReference type="Pfam" id="PF10298">
    <property type="entry name" value="WhiA_N"/>
    <property type="match status" value="1"/>
</dbReference>
<dbReference type="SUPFAM" id="SSF55608">
    <property type="entry name" value="Homing endonucleases"/>
    <property type="match status" value="1"/>
</dbReference>
<organism>
    <name type="scientific">Streptococcus pyogenes serotype M2 (strain MGAS10270)</name>
    <dbReference type="NCBI Taxonomy" id="370552"/>
    <lineage>
        <taxon>Bacteria</taxon>
        <taxon>Bacillati</taxon>
        <taxon>Bacillota</taxon>
        <taxon>Bacilli</taxon>
        <taxon>Lactobacillales</taxon>
        <taxon>Streptococcaceae</taxon>
        <taxon>Streptococcus</taxon>
    </lineage>
</organism>
<sequence length="303" mass="33949">MSFTTKVKEELIHLSTGDNNELAAIIKLSGSLGLAHQSLHLSITTENAKIARYIYSFIEDAYVIVPEIRYHQKTNLRKNRVYTVYVEQGVETILADLKLADSFFGLETGIEPQVLSDDNAGRSYLKGAFLAAGSIRDPESGKYQLEIYSVYLDHAQDLAQLMQKFMLDAKTIEHKSGAVTYLQKAEDIMDFLIIIGAMSCKEDFEAIKLLREARNDINRANNAETANIAKTISASMKTINNIIKIMDTIGLESLPIELQQVAQLRVKHPDYSIQQVADALEFPITKSGVNHRLRKINKIADDL</sequence>
<comment type="function">
    <text evidence="1">Involved in cell division and chromosome segregation.</text>
</comment>
<comment type="similarity">
    <text evidence="1">Belongs to the WhiA family.</text>
</comment>
<evidence type="ECO:0000255" key="1">
    <source>
        <dbReference type="HAMAP-Rule" id="MF_01420"/>
    </source>
</evidence>
<feature type="chain" id="PRO_0000376586" description="Probable cell division protein WhiA">
    <location>
        <begin position="1"/>
        <end position="303"/>
    </location>
</feature>
<feature type="DNA-binding region" description="H-T-H motif" evidence="1">
    <location>
        <begin position="272"/>
        <end position="303"/>
    </location>
</feature>
<proteinExistence type="inferred from homology"/>
<keyword id="KW-0131">Cell cycle</keyword>
<keyword id="KW-0132">Cell division</keyword>
<keyword id="KW-0238">DNA-binding</keyword>
<name>WHIA_STRPD</name>
<accession>Q1JHS3</accession>
<protein>
    <recommendedName>
        <fullName evidence="1">Probable cell division protein WhiA</fullName>
    </recommendedName>
</protein>
<gene>
    <name evidence="1" type="primary">whiA</name>
    <name type="ordered locus">MGAS10270_Spy0535</name>
</gene>
<reference key="1">
    <citation type="journal article" date="2006" name="Proc. Natl. Acad. Sci. U.S.A.">
        <title>Molecular genetic anatomy of inter- and intraserotype variation in the human bacterial pathogen group A Streptococcus.</title>
        <authorList>
            <person name="Beres S.B."/>
            <person name="Richter E.W."/>
            <person name="Nagiec M.J."/>
            <person name="Sumby P."/>
            <person name="Porcella S.F."/>
            <person name="DeLeo F.R."/>
            <person name="Musser J.M."/>
        </authorList>
    </citation>
    <scope>NUCLEOTIDE SEQUENCE [LARGE SCALE GENOMIC DNA]</scope>
    <source>
        <strain>MGAS10270</strain>
    </source>
</reference>